<gene>
    <name evidence="1" type="primary">atpF</name>
    <name type="ordered locus">RSal33209_1444</name>
</gene>
<evidence type="ECO:0000255" key="1">
    <source>
        <dbReference type="HAMAP-Rule" id="MF_01398"/>
    </source>
</evidence>
<sequence>MSNAEIFAASGEGVNPIVPNIWDTALVLIGFAILLFIVIKFVVPMFEKTFAERTEAIEGGIAKAEEAQAEATAALEEYKQQLAEARAEANKIREDARAEGAQILADLKEKAASESARITEQAQVAIAAERQAAVVSLRSEVGSLATTLAGRIVGESLQDDARSNRVVDRFLADLEANSKSEGAAK</sequence>
<proteinExistence type="inferred from homology"/>
<organism>
    <name type="scientific">Renibacterium salmoninarum (strain ATCC 33209 / DSM 20767 / JCM 11484 / NBRC 15589 / NCIMB 2235)</name>
    <dbReference type="NCBI Taxonomy" id="288705"/>
    <lineage>
        <taxon>Bacteria</taxon>
        <taxon>Bacillati</taxon>
        <taxon>Actinomycetota</taxon>
        <taxon>Actinomycetes</taxon>
        <taxon>Micrococcales</taxon>
        <taxon>Micrococcaceae</taxon>
        <taxon>Renibacterium</taxon>
    </lineage>
</organism>
<keyword id="KW-0066">ATP synthesis</keyword>
<keyword id="KW-1003">Cell membrane</keyword>
<keyword id="KW-0138">CF(0)</keyword>
<keyword id="KW-0375">Hydrogen ion transport</keyword>
<keyword id="KW-0406">Ion transport</keyword>
<keyword id="KW-0472">Membrane</keyword>
<keyword id="KW-1185">Reference proteome</keyword>
<keyword id="KW-0812">Transmembrane</keyword>
<keyword id="KW-1133">Transmembrane helix</keyword>
<keyword id="KW-0813">Transport</keyword>
<protein>
    <recommendedName>
        <fullName evidence="1">ATP synthase subunit b</fullName>
    </recommendedName>
    <alternativeName>
        <fullName evidence="1">ATP synthase F(0) sector subunit b</fullName>
    </alternativeName>
    <alternativeName>
        <fullName evidence="1">ATPase subunit I</fullName>
    </alternativeName>
    <alternativeName>
        <fullName evidence="1">F-type ATPase subunit b</fullName>
        <shortName evidence="1">F-ATPase subunit b</shortName>
    </alternativeName>
</protein>
<accession>A9WNC4</accession>
<reference key="1">
    <citation type="journal article" date="2008" name="J. Bacteriol.">
        <title>Genome sequence of the fish pathogen Renibacterium salmoninarum suggests reductive evolution away from an environmental Arthrobacter ancestor.</title>
        <authorList>
            <person name="Wiens G.D."/>
            <person name="Rockey D.D."/>
            <person name="Wu Z."/>
            <person name="Chang J."/>
            <person name="Levy R."/>
            <person name="Crane S."/>
            <person name="Chen D.S."/>
            <person name="Capri G.R."/>
            <person name="Burnett J.R."/>
            <person name="Sudheesh P.S."/>
            <person name="Schipma M.J."/>
            <person name="Burd H."/>
            <person name="Bhattacharyya A."/>
            <person name="Rhodes L.D."/>
            <person name="Kaul R."/>
            <person name="Strom M.S."/>
        </authorList>
    </citation>
    <scope>NUCLEOTIDE SEQUENCE [LARGE SCALE GENOMIC DNA]</scope>
    <source>
        <strain>ATCC 33209 / DSM 20767 / JCM 11484 / NBRC 15589 / NCIMB 2235</strain>
    </source>
</reference>
<dbReference type="EMBL" id="CP000910">
    <property type="protein sequence ID" value="ABY23180.1"/>
    <property type="molecule type" value="Genomic_DNA"/>
</dbReference>
<dbReference type="RefSeq" id="WP_012244861.1">
    <property type="nucleotide sequence ID" value="NC_010168.1"/>
</dbReference>
<dbReference type="SMR" id="A9WNC4"/>
<dbReference type="STRING" id="288705.RSal33209_1444"/>
<dbReference type="KEGG" id="rsa:RSal33209_1444"/>
<dbReference type="eggNOG" id="COG0711">
    <property type="taxonomic scope" value="Bacteria"/>
</dbReference>
<dbReference type="HOGENOM" id="CLU_079215_5_1_11"/>
<dbReference type="Proteomes" id="UP000002007">
    <property type="component" value="Chromosome"/>
</dbReference>
<dbReference type="GO" id="GO:0005886">
    <property type="term" value="C:plasma membrane"/>
    <property type="evidence" value="ECO:0007669"/>
    <property type="project" value="UniProtKB-SubCell"/>
</dbReference>
<dbReference type="GO" id="GO:0045259">
    <property type="term" value="C:proton-transporting ATP synthase complex"/>
    <property type="evidence" value="ECO:0007669"/>
    <property type="project" value="UniProtKB-KW"/>
</dbReference>
<dbReference type="GO" id="GO:0046933">
    <property type="term" value="F:proton-transporting ATP synthase activity, rotational mechanism"/>
    <property type="evidence" value="ECO:0007669"/>
    <property type="project" value="UniProtKB-UniRule"/>
</dbReference>
<dbReference type="GO" id="GO:0046961">
    <property type="term" value="F:proton-transporting ATPase activity, rotational mechanism"/>
    <property type="evidence" value="ECO:0007669"/>
    <property type="project" value="TreeGrafter"/>
</dbReference>
<dbReference type="CDD" id="cd06503">
    <property type="entry name" value="ATP-synt_Fo_b"/>
    <property type="match status" value="1"/>
</dbReference>
<dbReference type="Gene3D" id="1.20.5.620">
    <property type="entry name" value="F1F0 ATP synthase subunit B, membrane domain"/>
    <property type="match status" value="1"/>
</dbReference>
<dbReference type="HAMAP" id="MF_01398">
    <property type="entry name" value="ATP_synth_b_bprime"/>
    <property type="match status" value="1"/>
</dbReference>
<dbReference type="InterPro" id="IPR028987">
    <property type="entry name" value="ATP_synth_B-like_membr_sf"/>
</dbReference>
<dbReference type="InterPro" id="IPR002146">
    <property type="entry name" value="ATP_synth_b/b'su_bac/chlpt"/>
</dbReference>
<dbReference type="InterPro" id="IPR005864">
    <property type="entry name" value="ATP_synth_F0_bsu_bac"/>
</dbReference>
<dbReference type="InterPro" id="IPR050059">
    <property type="entry name" value="ATP_synthase_B_chain"/>
</dbReference>
<dbReference type="NCBIfam" id="TIGR01144">
    <property type="entry name" value="ATP_synt_b"/>
    <property type="match status" value="1"/>
</dbReference>
<dbReference type="NCBIfam" id="NF004412">
    <property type="entry name" value="PRK05759.1-3"/>
    <property type="match status" value="1"/>
</dbReference>
<dbReference type="PANTHER" id="PTHR33445:SF1">
    <property type="entry name" value="ATP SYNTHASE SUBUNIT B"/>
    <property type="match status" value="1"/>
</dbReference>
<dbReference type="PANTHER" id="PTHR33445">
    <property type="entry name" value="ATP SYNTHASE SUBUNIT B', CHLOROPLASTIC"/>
    <property type="match status" value="1"/>
</dbReference>
<dbReference type="Pfam" id="PF00430">
    <property type="entry name" value="ATP-synt_B"/>
    <property type="match status" value="1"/>
</dbReference>
<dbReference type="SUPFAM" id="SSF81573">
    <property type="entry name" value="F1F0 ATP synthase subunit B, membrane domain"/>
    <property type="match status" value="1"/>
</dbReference>
<feature type="chain" id="PRO_0000368706" description="ATP synthase subunit b">
    <location>
        <begin position="1"/>
        <end position="185"/>
    </location>
</feature>
<feature type="transmembrane region" description="Helical" evidence="1">
    <location>
        <begin position="26"/>
        <end position="46"/>
    </location>
</feature>
<comment type="function">
    <text evidence="1">F(1)F(0) ATP synthase produces ATP from ADP in the presence of a proton or sodium gradient. F-type ATPases consist of two structural domains, F(1) containing the extramembraneous catalytic core and F(0) containing the membrane proton channel, linked together by a central stalk and a peripheral stalk. During catalysis, ATP synthesis in the catalytic domain of F(1) is coupled via a rotary mechanism of the central stalk subunits to proton translocation.</text>
</comment>
<comment type="function">
    <text evidence="1">Component of the F(0) channel, it forms part of the peripheral stalk, linking F(1) to F(0).</text>
</comment>
<comment type="subunit">
    <text evidence="1">F-type ATPases have 2 components, F(1) - the catalytic core - and F(0) - the membrane proton channel. F(1) has five subunits: alpha(3), beta(3), gamma(1), delta(1), epsilon(1). F(0) has three main subunits: a(1), b(2) and c(10-14). The alpha and beta chains form an alternating ring which encloses part of the gamma chain. F(1) is attached to F(0) by a central stalk formed by the gamma and epsilon chains, while a peripheral stalk is formed by the delta and b chains.</text>
</comment>
<comment type="subcellular location">
    <subcellularLocation>
        <location evidence="1">Cell membrane</location>
        <topology evidence="1">Single-pass membrane protein</topology>
    </subcellularLocation>
</comment>
<comment type="similarity">
    <text evidence="1">Belongs to the ATPase B chain family.</text>
</comment>
<name>ATPF_RENSM</name>